<comment type="function">
    <text evidence="1">Plays a central role in 2-thiolation of mcm(5)S(2)U at tRNA wobble positions of tRNA(Lys), tRNA(Glu) and tRNA(Gln). May act by forming a heterodimer with NCS6 that ligates sulfur from thiocarboxylated URM1 onto the uridine of tRNAs at wobble position. Prior mcm(5) tRNA modification by the elongator complex is required for 2-thiolation. May also be involved in protein urmylation.</text>
</comment>
<comment type="pathway">
    <text evidence="1">tRNA modification; 5-methoxycarbonylmethyl-2-thiouridine-tRNA biosynthesis.</text>
</comment>
<comment type="subcellular location">
    <subcellularLocation>
        <location evidence="1">Cytoplasm</location>
    </subcellularLocation>
</comment>
<comment type="similarity">
    <text evidence="1">Belongs to the CTU2/NCS2 family.</text>
</comment>
<proteinExistence type="inferred from homology"/>
<organism>
    <name type="scientific">Coccidioides immitis (strain RS)</name>
    <name type="common">Valley fever fungus</name>
    <dbReference type="NCBI Taxonomy" id="246410"/>
    <lineage>
        <taxon>Eukaryota</taxon>
        <taxon>Fungi</taxon>
        <taxon>Dikarya</taxon>
        <taxon>Ascomycota</taxon>
        <taxon>Pezizomycotina</taxon>
        <taxon>Eurotiomycetes</taxon>
        <taxon>Eurotiomycetidae</taxon>
        <taxon>Onygenales</taxon>
        <taxon>Onygenaceae</taxon>
        <taxon>Coccidioides</taxon>
    </lineage>
</organism>
<accession>Q1DK31</accession>
<accession>J3K2U1</accession>
<feature type="chain" id="PRO_0000369294" description="Cytoplasmic tRNA 2-thiolation protein 2">
    <location>
        <begin position="1"/>
        <end position="376"/>
    </location>
</feature>
<keyword id="KW-0963">Cytoplasm</keyword>
<keyword id="KW-1185">Reference proteome</keyword>
<keyword id="KW-0819">tRNA processing</keyword>
<gene>
    <name evidence="1" type="primary">NCS2</name>
    <name evidence="1" type="synonym">CTU2</name>
    <name type="ORF">CIMG_09332</name>
</gene>
<name>CTU2_COCIM</name>
<reference key="1">
    <citation type="journal article" date="2009" name="Genome Res.">
        <title>Comparative genomic analyses of the human fungal pathogens Coccidioides and their relatives.</title>
        <authorList>
            <person name="Sharpton T.J."/>
            <person name="Stajich J.E."/>
            <person name="Rounsley S.D."/>
            <person name="Gardner M.J."/>
            <person name="Wortman J.R."/>
            <person name="Jordar V.S."/>
            <person name="Maiti R."/>
            <person name="Kodira C.D."/>
            <person name="Neafsey D.E."/>
            <person name="Zeng Q."/>
            <person name="Hung C.-Y."/>
            <person name="McMahan C."/>
            <person name="Muszewska A."/>
            <person name="Grynberg M."/>
            <person name="Mandel M.A."/>
            <person name="Kellner E.M."/>
            <person name="Barker B.M."/>
            <person name="Galgiani J.N."/>
            <person name="Orbach M.J."/>
            <person name="Kirkland T.N."/>
            <person name="Cole G.T."/>
            <person name="Henn M.R."/>
            <person name="Birren B.W."/>
            <person name="Taylor J.W."/>
        </authorList>
    </citation>
    <scope>NUCLEOTIDE SEQUENCE [LARGE SCALE GENOMIC DNA]</scope>
    <source>
        <strain>RS</strain>
    </source>
</reference>
<reference key="2">
    <citation type="journal article" date="2010" name="Genome Res.">
        <title>Population genomic sequencing of Coccidioides fungi reveals recent hybridization and transposon control.</title>
        <authorList>
            <person name="Neafsey D.E."/>
            <person name="Barker B.M."/>
            <person name="Sharpton T.J."/>
            <person name="Stajich J.E."/>
            <person name="Park D.J."/>
            <person name="Whiston E."/>
            <person name="Hung C.-Y."/>
            <person name="McMahan C."/>
            <person name="White J."/>
            <person name="Sykes S."/>
            <person name="Heiman D."/>
            <person name="Young S."/>
            <person name="Zeng Q."/>
            <person name="Abouelleil A."/>
            <person name="Aftuck L."/>
            <person name="Bessette D."/>
            <person name="Brown A."/>
            <person name="FitzGerald M."/>
            <person name="Lui A."/>
            <person name="Macdonald J.P."/>
            <person name="Priest M."/>
            <person name="Orbach M.J."/>
            <person name="Galgiani J.N."/>
            <person name="Kirkland T.N."/>
            <person name="Cole G.T."/>
            <person name="Birren B.W."/>
            <person name="Henn M.R."/>
            <person name="Taylor J.W."/>
            <person name="Rounsley S.D."/>
        </authorList>
    </citation>
    <scope>GENOME REANNOTATION</scope>
    <source>
        <strain>RS</strain>
    </source>
</reference>
<protein>
    <recommendedName>
        <fullName evidence="1">Cytoplasmic tRNA 2-thiolation protein 2</fullName>
    </recommendedName>
</protein>
<sequence>MSCVDCRFAPACVTVRTRNLCENCFIRFLQTKVLRRMERYRLRNAPKDRQRKLILPLSYGVSSLALLHIVSSLLLKQRTTGQKRTAFDLHVLIVDPVSLHPSKGAAASGRLAKIKEAYPDNTYSEVPLRSIFDYDPDIRGDISQHTGIPLGSNPSRSDEEILNLFRASFSTATARADIDGILLRRLIVAFAKSHKCDGILWGDSDSRLAAKTLANVAKGRGSSLVWNVCEGMSPWDIYFNFPLRDLYKSELEVYASYALRDLQQIIDQDPRNFEDLSNRHMSIEDLMSQYVLTQGAKYPGVMANIVRTVDKLTTPGVENAKMCILCRVPAGENLNAASGSQMDIGSNGETTTVPRSTCYGCMRTLLDMKAPTSNSG</sequence>
<dbReference type="EMBL" id="GG704915">
    <property type="protein sequence ID" value="EAS28128.3"/>
    <property type="molecule type" value="Genomic_DNA"/>
</dbReference>
<dbReference type="RefSeq" id="XP_001239711.2">
    <property type="nucleotide sequence ID" value="XM_001239710.2"/>
</dbReference>
<dbReference type="SMR" id="Q1DK31"/>
<dbReference type="FunCoup" id="Q1DK31">
    <property type="interactions" value="174"/>
</dbReference>
<dbReference type="STRING" id="246410.Q1DK31"/>
<dbReference type="GeneID" id="4558704"/>
<dbReference type="KEGG" id="cim:CIMG_09332"/>
<dbReference type="VEuPathDB" id="FungiDB:CIMG_09332"/>
<dbReference type="InParanoid" id="Q1DK31"/>
<dbReference type="OMA" id="KQRKQMM"/>
<dbReference type="OrthoDB" id="25129at2759"/>
<dbReference type="UniPathway" id="UPA00988"/>
<dbReference type="Proteomes" id="UP000001261">
    <property type="component" value="Unassembled WGS sequence"/>
</dbReference>
<dbReference type="GO" id="GO:0005829">
    <property type="term" value="C:cytosol"/>
    <property type="evidence" value="ECO:0000250"/>
    <property type="project" value="UniProtKB"/>
</dbReference>
<dbReference type="GO" id="GO:0016779">
    <property type="term" value="F:nucleotidyltransferase activity"/>
    <property type="evidence" value="ECO:0007669"/>
    <property type="project" value="UniProtKB-UniRule"/>
</dbReference>
<dbReference type="GO" id="GO:0016783">
    <property type="term" value="F:sulfurtransferase activity"/>
    <property type="evidence" value="ECO:0007669"/>
    <property type="project" value="TreeGrafter"/>
</dbReference>
<dbReference type="GO" id="GO:0000049">
    <property type="term" value="F:tRNA binding"/>
    <property type="evidence" value="ECO:0007669"/>
    <property type="project" value="InterPro"/>
</dbReference>
<dbReference type="GO" id="GO:0032447">
    <property type="term" value="P:protein urmylation"/>
    <property type="evidence" value="ECO:0007669"/>
    <property type="project" value="UniProtKB-UniRule"/>
</dbReference>
<dbReference type="GO" id="GO:0034227">
    <property type="term" value="P:tRNA thio-modification"/>
    <property type="evidence" value="ECO:0000250"/>
    <property type="project" value="UniProtKB"/>
</dbReference>
<dbReference type="GO" id="GO:0002143">
    <property type="term" value="P:tRNA wobble position uridine thiolation"/>
    <property type="evidence" value="ECO:0007669"/>
    <property type="project" value="TreeGrafter"/>
</dbReference>
<dbReference type="GO" id="GO:0002098">
    <property type="term" value="P:tRNA wobble uridine modification"/>
    <property type="evidence" value="ECO:0000250"/>
    <property type="project" value="UniProtKB"/>
</dbReference>
<dbReference type="FunFam" id="3.40.50.620:FF:000143">
    <property type="entry name" value="Cytoplasmic tRNA 2-thiolation protein 2"/>
    <property type="match status" value="1"/>
</dbReference>
<dbReference type="Gene3D" id="3.40.50.620">
    <property type="entry name" value="HUPs"/>
    <property type="match status" value="1"/>
</dbReference>
<dbReference type="HAMAP" id="MF_03054">
    <property type="entry name" value="CTU2"/>
    <property type="match status" value="1"/>
</dbReference>
<dbReference type="InterPro" id="IPR019407">
    <property type="entry name" value="CTU2"/>
</dbReference>
<dbReference type="InterPro" id="IPR014729">
    <property type="entry name" value="Rossmann-like_a/b/a_fold"/>
</dbReference>
<dbReference type="PANTHER" id="PTHR20882">
    <property type="entry name" value="CYTOPLASMIC TRNA 2-THIOLATION PROTEIN 2"/>
    <property type="match status" value="1"/>
</dbReference>
<dbReference type="PANTHER" id="PTHR20882:SF14">
    <property type="entry name" value="CYTOPLASMIC TRNA 2-THIOLATION PROTEIN 2"/>
    <property type="match status" value="1"/>
</dbReference>
<dbReference type="Pfam" id="PF10288">
    <property type="entry name" value="CTU2"/>
    <property type="match status" value="1"/>
</dbReference>
<dbReference type="SUPFAM" id="SSF52402">
    <property type="entry name" value="Adenine nucleotide alpha hydrolases-like"/>
    <property type="match status" value="1"/>
</dbReference>
<evidence type="ECO:0000255" key="1">
    <source>
        <dbReference type="HAMAP-Rule" id="MF_03054"/>
    </source>
</evidence>